<feature type="chain" id="PRO_1000064104" description="2,3-bisphosphoglycerate-dependent phosphoglycerate mutase">
    <location>
        <begin position="1"/>
        <end position="230"/>
    </location>
</feature>
<feature type="active site" description="Tele-phosphohistidine intermediate" evidence="1">
    <location>
        <position position="9"/>
    </location>
</feature>
<feature type="active site" description="Proton donor/acceptor" evidence="1">
    <location>
        <position position="87"/>
    </location>
</feature>
<feature type="binding site" evidence="1">
    <location>
        <begin position="8"/>
        <end position="15"/>
    </location>
    <ligand>
        <name>substrate</name>
    </ligand>
</feature>
<feature type="binding site" evidence="1">
    <location>
        <begin position="21"/>
        <end position="22"/>
    </location>
    <ligand>
        <name>substrate</name>
    </ligand>
</feature>
<feature type="binding site" evidence="1">
    <location>
        <position position="60"/>
    </location>
    <ligand>
        <name>substrate</name>
    </ligand>
</feature>
<feature type="binding site" evidence="1">
    <location>
        <begin position="87"/>
        <end position="90"/>
    </location>
    <ligand>
        <name>substrate</name>
    </ligand>
</feature>
<feature type="binding site" evidence="1">
    <location>
        <position position="98"/>
    </location>
    <ligand>
        <name>substrate</name>
    </ligand>
</feature>
<feature type="binding site" evidence="1">
    <location>
        <begin position="114"/>
        <end position="115"/>
    </location>
    <ligand>
        <name>substrate</name>
    </ligand>
</feature>
<feature type="binding site" evidence="1">
    <location>
        <begin position="183"/>
        <end position="184"/>
    </location>
    <ligand>
        <name>substrate</name>
    </ligand>
</feature>
<feature type="site" description="Transition state stabilizer" evidence="1">
    <location>
        <position position="182"/>
    </location>
</feature>
<sequence>MVKLVFARHGESEWNKANLFTGWADVDLSEKGTQQAIDAGKLIKEAGIEFDQAYTSVLKRAIKTTNLALEASDQLWVPVEKSWRLNERHYGGLTGKNKAEAAEQFGDEQVHIWRRSYDVLPPNMDRDDEHSAHTDRRYASLDDSVIPDAENLKVTLERALPFWEDKIAPALKDGKNVFVGAHGNSIRALVKHIKGLSDDEIMDVEIPNFPPLVFEFDEKLNVVSEYYLGK</sequence>
<comment type="function">
    <text evidence="1">Catalyzes the interconversion of 2-phosphoglycerate and 3-phosphoglycerate.</text>
</comment>
<comment type="catalytic activity">
    <reaction evidence="1">
        <text>(2R)-2-phosphoglycerate = (2R)-3-phosphoglycerate</text>
        <dbReference type="Rhea" id="RHEA:15901"/>
        <dbReference type="ChEBI" id="CHEBI:58272"/>
        <dbReference type="ChEBI" id="CHEBI:58289"/>
        <dbReference type="EC" id="5.4.2.11"/>
    </reaction>
</comment>
<comment type="pathway">
    <text evidence="1">Carbohydrate degradation; glycolysis; pyruvate from D-glyceraldehyde 3-phosphate: step 3/5.</text>
</comment>
<comment type="similarity">
    <text evidence="1">Belongs to the phosphoglycerate mutase family. BPG-dependent PGAM subfamily.</text>
</comment>
<accession>Q04JB4</accession>
<dbReference type="EC" id="5.4.2.11" evidence="1"/>
<dbReference type="EMBL" id="CP000410">
    <property type="protein sequence ID" value="ABJ54957.1"/>
    <property type="molecule type" value="Genomic_DNA"/>
</dbReference>
<dbReference type="RefSeq" id="WP_000240129.1">
    <property type="nucleotide sequence ID" value="NZ_JAMLJR010000013.1"/>
</dbReference>
<dbReference type="SMR" id="Q04JB4"/>
<dbReference type="PaxDb" id="373153-SPD_1468"/>
<dbReference type="KEGG" id="spd:SPD_1468"/>
<dbReference type="eggNOG" id="COG0588">
    <property type="taxonomic scope" value="Bacteria"/>
</dbReference>
<dbReference type="HOGENOM" id="CLU_033323_1_5_9"/>
<dbReference type="BioCyc" id="SPNE373153:G1G6V-1584-MONOMER"/>
<dbReference type="UniPathway" id="UPA00109">
    <property type="reaction ID" value="UER00186"/>
</dbReference>
<dbReference type="Proteomes" id="UP000001452">
    <property type="component" value="Chromosome"/>
</dbReference>
<dbReference type="GO" id="GO:0004619">
    <property type="term" value="F:phosphoglycerate mutase activity"/>
    <property type="evidence" value="ECO:0007669"/>
    <property type="project" value="UniProtKB-EC"/>
</dbReference>
<dbReference type="GO" id="GO:0006094">
    <property type="term" value="P:gluconeogenesis"/>
    <property type="evidence" value="ECO:0007669"/>
    <property type="project" value="UniProtKB-UniRule"/>
</dbReference>
<dbReference type="GO" id="GO:0006096">
    <property type="term" value="P:glycolytic process"/>
    <property type="evidence" value="ECO:0007669"/>
    <property type="project" value="UniProtKB-UniRule"/>
</dbReference>
<dbReference type="CDD" id="cd07067">
    <property type="entry name" value="HP_PGM_like"/>
    <property type="match status" value="1"/>
</dbReference>
<dbReference type="FunFam" id="3.40.50.1240:FF:000003">
    <property type="entry name" value="2,3-bisphosphoglycerate-dependent phosphoglycerate mutase"/>
    <property type="match status" value="1"/>
</dbReference>
<dbReference type="Gene3D" id="3.40.50.1240">
    <property type="entry name" value="Phosphoglycerate mutase-like"/>
    <property type="match status" value="1"/>
</dbReference>
<dbReference type="HAMAP" id="MF_01039">
    <property type="entry name" value="PGAM_GpmA"/>
    <property type="match status" value="1"/>
</dbReference>
<dbReference type="InterPro" id="IPR013078">
    <property type="entry name" value="His_Pase_superF_clade-1"/>
</dbReference>
<dbReference type="InterPro" id="IPR029033">
    <property type="entry name" value="His_PPase_superfam"/>
</dbReference>
<dbReference type="InterPro" id="IPR005952">
    <property type="entry name" value="Phosphogly_mut1"/>
</dbReference>
<dbReference type="NCBIfam" id="TIGR01258">
    <property type="entry name" value="pgm_1"/>
    <property type="match status" value="1"/>
</dbReference>
<dbReference type="NCBIfam" id="NF010713">
    <property type="entry name" value="PRK14115.1"/>
    <property type="match status" value="1"/>
</dbReference>
<dbReference type="NCBIfam" id="NF010715">
    <property type="entry name" value="PRK14117.1"/>
    <property type="match status" value="1"/>
</dbReference>
<dbReference type="PANTHER" id="PTHR11931">
    <property type="entry name" value="PHOSPHOGLYCERATE MUTASE"/>
    <property type="match status" value="1"/>
</dbReference>
<dbReference type="Pfam" id="PF00300">
    <property type="entry name" value="His_Phos_1"/>
    <property type="match status" value="1"/>
</dbReference>
<dbReference type="PIRSF" id="PIRSF000709">
    <property type="entry name" value="6PFK_2-Ptase"/>
    <property type="match status" value="1"/>
</dbReference>
<dbReference type="SMART" id="SM00855">
    <property type="entry name" value="PGAM"/>
    <property type="match status" value="1"/>
</dbReference>
<dbReference type="SUPFAM" id="SSF53254">
    <property type="entry name" value="Phosphoglycerate mutase-like"/>
    <property type="match status" value="1"/>
</dbReference>
<evidence type="ECO:0000255" key="1">
    <source>
        <dbReference type="HAMAP-Rule" id="MF_01039"/>
    </source>
</evidence>
<keyword id="KW-0312">Gluconeogenesis</keyword>
<keyword id="KW-0324">Glycolysis</keyword>
<keyword id="KW-0413">Isomerase</keyword>
<keyword id="KW-1185">Reference proteome</keyword>
<gene>
    <name evidence="1" type="primary">gpmA</name>
    <name type="ordered locus">SPD_1468</name>
</gene>
<reference key="1">
    <citation type="journal article" date="2007" name="J. Bacteriol.">
        <title>Genome sequence of Avery's virulent serotype 2 strain D39 of Streptococcus pneumoniae and comparison with that of unencapsulated laboratory strain R6.</title>
        <authorList>
            <person name="Lanie J.A."/>
            <person name="Ng W.-L."/>
            <person name="Kazmierczak K.M."/>
            <person name="Andrzejewski T.M."/>
            <person name="Davidsen T.M."/>
            <person name="Wayne K.J."/>
            <person name="Tettelin H."/>
            <person name="Glass J.I."/>
            <person name="Winkler M.E."/>
        </authorList>
    </citation>
    <scope>NUCLEOTIDE SEQUENCE [LARGE SCALE GENOMIC DNA]</scope>
    <source>
        <strain>D39 / NCTC 7466</strain>
    </source>
</reference>
<organism>
    <name type="scientific">Streptococcus pneumoniae serotype 2 (strain D39 / NCTC 7466)</name>
    <dbReference type="NCBI Taxonomy" id="373153"/>
    <lineage>
        <taxon>Bacteria</taxon>
        <taxon>Bacillati</taxon>
        <taxon>Bacillota</taxon>
        <taxon>Bacilli</taxon>
        <taxon>Lactobacillales</taxon>
        <taxon>Streptococcaceae</taxon>
        <taxon>Streptococcus</taxon>
    </lineage>
</organism>
<proteinExistence type="inferred from homology"/>
<name>GPMA_STRP2</name>
<protein>
    <recommendedName>
        <fullName evidence="1">2,3-bisphosphoglycerate-dependent phosphoglycerate mutase</fullName>
        <shortName evidence="1">BPG-dependent PGAM</shortName>
        <shortName evidence="1">PGAM</shortName>
        <shortName evidence="1">Phosphoglyceromutase</shortName>
        <shortName evidence="1">dPGM</shortName>
        <ecNumber evidence="1">5.4.2.11</ecNumber>
    </recommendedName>
</protein>